<name>PHLD_MYCTU</name>
<feature type="chain" id="PRO_0000023945" description="Phospholipase C D">
    <location>
        <begin position="1"/>
        <end position="280"/>
    </location>
</feature>
<feature type="region of interest" description="Disordered" evidence="1">
    <location>
        <begin position="258"/>
        <end position="280"/>
    </location>
</feature>
<feature type="non-terminal residue" evidence="5">
    <location>
        <position position="1"/>
    </location>
</feature>
<comment type="function">
    <text evidence="2">Involved in virulence (PubMed:20736081). Induces cytotoxic effects on mouse macrophage cell lines, via direct or indirect enzymatic hydrolysis of cell membrane phospholipids (PubMed:20736081). Hydrolyzes phosphatidylcholine (PubMed:20736081). Does not have hemolytic activity (PubMed:20736081).</text>
</comment>
<comment type="catalytic activity">
    <reaction evidence="2">
        <text>a 1,2-diacyl-sn-glycero-3-phosphocholine + H2O = phosphocholine + a 1,2-diacyl-sn-glycerol + H(+)</text>
        <dbReference type="Rhea" id="RHEA:10604"/>
        <dbReference type="ChEBI" id="CHEBI:15377"/>
        <dbReference type="ChEBI" id="CHEBI:15378"/>
        <dbReference type="ChEBI" id="CHEBI:17815"/>
        <dbReference type="ChEBI" id="CHEBI:57643"/>
        <dbReference type="ChEBI" id="CHEBI:295975"/>
        <dbReference type="EC" id="3.1.4.3"/>
    </reaction>
    <physiologicalReaction direction="left-to-right" evidence="2">
        <dbReference type="Rhea" id="RHEA:10605"/>
    </physiologicalReaction>
</comment>
<comment type="catalytic activity">
    <reaction evidence="2">
        <text>1,2-dihexadecanoyl-sn-glycero-3-phosphocholine + H2O = 1,2-dihexadecanoyl-sn-glycerol + phosphocholine + H(+)</text>
        <dbReference type="Rhea" id="RHEA:45304"/>
        <dbReference type="ChEBI" id="CHEBI:15377"/>
        <dbReference type="ChEBI" id="CHEBI:15378"/>
        <dbReference type="ChEBI" id="CHEBI:72999"/>
        <dbReference type="ChEBI" id="CHEBI:82929"/>
        <dbReference type="ChEBI" id="CHEBI:295975"/>
    </reaction>
    <physiologicalReaction direction="left-to-right" evidence="2">
        <dbReference type="Rhea" id="RHEA:45305"/>
    </physiologicalReaction>
</comment>
<comment type="biophysicochemical properties">
    <phDependence>
        <text evidence="2">Optimum pH is 7.5.</text>
    </phDependence>
    <temperatureDependence>
        <text evidence="2">Optimum temperature is 37 degrees Celsius.</text>
    </temperatureDependence>
</comment>
<comment type="subcellular location">
    <subcellularLocation>
        <location evidence="2">Secreted</location>
        <location evidence="2">Cell wall</location>
    </subcellularLocation>
    <text evidence="2">Remains associated with the cell.</text>
</comment>
<comment type="miscellaneous">
    <text>Polymorphism was discovered in the phospholipase plcD region.</text>
</comment>
<comment type="similarity">
    <text evidence="5">Belongs to the bacterial phospholipase C family.</text>
</comment>
<comment type="caution">
    <text evidence="2 6 7">In strain H37Rv, PLC-D lacks the N-terminal domain. The gene is truncated and interrupted by the insertion of an IS6110 element. However, when expressed in M.smegmatis, recombinant PLC-D is detected in the cell wall fraction and shows phospholipase activity (PubMed:20736081).</text>
</comment>
<evidence type="ECO:0000256" key="1">
    <source>
        <dbReference type="SAM" id="MobiDB-lite"/>
    </source>
</evidence>
<evidence type="ECO:0000269" key="2">
    <source>
    </source>
</evidence>
<evidence type="ECO:0000303" key="3">
    <source>
    </source>
</evidence>
<evidence type="ECO:0000303" key="4">
    <source>
    </source>
</evidence>
<evidence type="ECO:0000305" key="5"/>
<evidence type="ECO:0000305" key="6">
    <source>
    </source>
</evidence>
<evidence type="ECO:0000305" key="7">
    <source>
    </source>
</evidence>
<proteinExistence type="evidence at protein level"/>
<gene>
    <name evidence="3" type="primary">plcD</name>
    <name type="ordered locus">Rv1755c</name>
    <name type="ORF">MTCY28.21c</name>
</gene>
<keyword id="KW-0134">Cell wall</keyword>
<keyword id="KW-0378">Hydrolase</keyword>
<keyword id="KW-1185">Reference proteome</keyword>
<keyword id="KW-0964">Secreted</keyword>
<keyword id="KW-0843">Virulence</keyword>
<reference key="1">
    <citation type="journal article" date="1998" name="Nature">
        <title>Deciphering the biology of Mycobacterium tuberculosis from the complete genome sequence.</title>
        <authorList>
            <person name="Cole S.T."/>
            <person name="Brosch R."/>
            <person name="Parkhill J."/>
            <person name="Garnier T."/>
            <person name="Churcher C.M."/>
            <person name="Harris D.E."/>
            <person name="Gordon S.V."/>
            <person name="Eiglmeier K."/>
            <person name="Gas S."/>
            <person name="Barry C.E. III"/>
            <person name="Tekaia F."/>
            <person name="Badcock K."/>
            <person name="Basham D."/>
            <person name="Brown D."/>
            <person name="Chillingworth T."/>
            <person name="Connor R."/>
            <person name="Davies R.M."/>
            <person name="Devlin K."/>
            <person name="Feltwell T."/>
            <person name="Gentles S."/>
            <person name="Hamlin N."/>
            <person name="Holroyd S."/>
            <person name="Hornsby T."/>
            <person name="Jagels K."/>
            <person name="Krogh A."/>
            <person name="McLean J."/>
            <person name="Moule S."/>
            <person name="Murphy L.D."/>
            <person name="Oliver S."/>
            <person name="Osborne J."/>
            <person name="Quail M.A."/>
            <person name="Rajandream M.A."/>
            <person name="Rogers J."/>
            <person name="Rutter S."/>
            <person name="Seeger K."/>
            <person name="Skelton S."/>
            <person name="Squares S."/>
            <person name="Squares R."/>
            <person name="Sulston J.E."/>
            <person name="Taylor K."/>
            <person name="Whitehead S."/>
            <person name="Barrell B.G."/>
        </authorList>
    </citation>
    <scope>NUCLEOTIDE SEQUENCE [LARGE SCALE GENOMIC DNA]</scope>
    <source>
        <strain>ATCC 25618 / H37Rv</strain>
    </source>
</reference>
<reference key="2">
    <citation type="journal article" date="2002" name="Mol. Microbiol.">
        <title>Phospholipases C are involved in the virulence of Mycobacterium tuberculosis.</title>
        <authorList>
            <person name="Raynaud C."/>
            <person name="Guilhot C."/>
            <person name="Rauzier J."/>
            <person name="Bordat Y."/>
            <person name="Pelicic V."/>
            <person name="Manganelli R."/>
            <person name="Smith I."/>
            <person name="Gicquel B."/>
            <person name="Jackson M."/>
        </authorList>
    </citation>
    <scope>GENE FAMILY</scope>
    <source>
        <strain>H37Rv</strain>
    </source>
</reference>
<reference key="3">
    <citation type="journal article" date="2010" name="Biochim. Biophys. Acta">
        <title>Evidence for the cytotoxic effects of Mycobacterium tuberculosis phospholipase C towards macrophages.</title>
        <authorList>
            <person name="Bakala N'goma J.C."/>
            <person name="Schue M."/>
            <person name="Carriere F."/>
            <person name="Geerlof A."/>
            <person name="Canaan S."/>
        </authorList>
    </citation>
    <scope>FUNCTION</scope>
    <scope>CATALYTIC ACTIVITY</scope>
    <scope>BIOPHYSICOCHEMICAL PROPERTIES</scope>
    <scope>SUBCELLULAR LOCATION</scope>
    <scope>EXPRESSION IN M.SMEGMATIS</scope>
    <source>
        <strain>H37Rv</strain>
    </source>
</reference>
<dbReference type="EC" id="3.1.4.3" evidence="2"/>
<dbReference type="EMBL" id="AL123456">
    <property type="protein sequence ID" value="CCP44521.1"/>
    <property type="molecule type" value="Genomic_DNA"/>
</dbReference>
<dbReference type="PIR" id="D70987">
    <property type="entry name" value="D70987"/>
</dbReference>
<dbReference type="SMR" id="P9WIA9"/>
<dbReference type="FunCoup" id="P9WIA9">
    <property type="interactions" value="3"/>
</dbReference>
<dbReference type="STRING" id="83332.Rv1755c"/>
<dbReference type="SwissLipids" id="SLP:000001398"/>
<dbReference type="PaxDb" id="83332-Rv1755c"/>
<dbReference type="TubercuList" id="Rv1755c"/>
<dbReference type="eggNOG" id="COG3511">
    <property type="taxonomic scope" value="Bacteria"/>
</dbReference>
<dbReference type="InParanoid" id="P9WIA9"/>
<dbReference type="Proteomes" id="UP000001584">
    <property type="component" value="Chromosome"/>
</dbReference>
<dbReference type="GO" id="GO:0005576">
    <property type="term" value="C:extracellular region"/>
    <property type="evidence" value="ECO:0007669"/>
    <property type="project" value="UniProtKB-KW"/>
</dbReference>
<dbReference type="GO" id="GO:0034480">
    <property type="term" value="F:phosphatidylcholine phospholipase C activity"/>
    <property type="evidence" value="ECO:0000315"/>
    <property type="project" value="MTBBASE"/>
</dbReference>
<dbReference type="GO" id="GO:0016042">
    <property type="term" value="P:lipid catabolic process"/>
    <property type="evidence" value="ECO:0000315"/>
    <property type="project" value="MTBBASE"/>
</dbReference>
<dbReference type="GO" id="GO:0052008">
    <property type="term" value="P:symbiont-mediated disruption of host cellular anatomical structure"/>
    <property type="evidence" value="ECO:0000314"/>
    <property type="project" value="MTBBASE"/>
</dbReference>
<dbReference type="FunFam" id="3.40.720.10:FF:000036">
    <property type="entry name" value="Membrane-associated phospholipase C"/>
    <property type="match status" value="1"/>
</dbReference>
<dbReference type="Gene3D" id="3.40.720.10">
    <property type="entry name" value="Alkaline Phosphatase, subunit A"/>
    <property type="match status" value="1"/>
</dbReference>
<dbReference type="InterPro" id="IPR017850">
    <property type="entry name" value="Alkaline_phosphatase_core_sf"/>
</dbReference>
<dbReference type="InterPro" id="IPR007312">
    <property type="entry name" value="Phosphoesterase"/>
</dbReference>
<dbReference type="PANTHER" id="PTHR31956:SF1">
    <property type="entry name" value="NON-SPECIFIC PHOSPHOLIPASE C1"/>
    <property type="match status" value="1"/>
</dbReference>
<dbReference type="PANTHER" id="PTHR31956">
    <property type="entry name" value="NON-SPECIFIC PHOSPHOLIPASE C4-RELATED"/>
    <property type="match status" value="1"/>
</dbReference>
<dbReference type="Pfam" id="PF04185">
    <property type="entry name" value="Phosphoesterase"/>
    <property type="match status" value="1"/>
</dbReference>
<protein>
    <recommendedName>
        <fullName evidence="5">Phospholipase C D</fullName>
        <shortName evidence="4">PLC-D</shortName>
        <ecNumber evidence="2">3.1.4.3</ecNumber>
    </recommendedName>
</protein>
<sequence>DAGVSWKVYRNKTLGPISSVLTYGSLVTSFKQSADPRSDLVRFGVAPSYPASFAADVLANRLPRVSWVIPNVLESEHPAVPAAAGAFAIVNILRILLANPAVWEKTALIVSYDENGGFFDHVVPATAPAGTPGEYVTVPDIDQVPGSGGIRGPIGLGFRVPCFVISPYSRGPQMVHDTFDHTSQLRLLETRFGVPVPNLTAWRRSVTGDMTSTFNFAVPPNSSWPNLDYPGLHALSTVPQCVPNAALGTINRGIPYRVPDPQIMPTQETTPTRGIPSGPC</sequence>
<organism>
    <name type="scientific">Mycobacterium tuberculosis (strain ATCC 25618 / H37Rv)</name>
    <dbReference type="NCBI Taxonomy" id="83332"/>
    <lineage>
        <taxon>Bacteria</taxon>
        <taxon>Bacillati</taxon>
        <taxon>Actinomycetota</taxon>
        <taxon>Actinomycetes</taxon>
        <taxon>Mycobacteriales</taxon>
        <taxon>Mycobacteriaceae</taxon>
        <taxon>Mycobacterium</taxon>
        <taxon>Mycobacterium tuberculosis complex</taxon>
    </lineage>
</organism>
<accession>P9WIA9</accession>
<accession>L0T7L1</accession>
<accession>O06792</accession>
<accession>P0A5R8</accession>
<accession>Q9XB13</accession>